<comment type="subunit">
    <text evidence="1">Part of the 50S ribosomal subunit.</text>
</comment>
<comment type="similarity">
    <text evidence="1">Belongs to the universal ribosomal protein uL30 family.</text>
</comment>
<evidence type="ECO:0000255" key="1">
    <source>
        <dbReference type="HAMAP-Rule" id="MF_01371"/>
    </source>
</evidence>
<evidence type="ECO:0000305" key="2"/>
<feature type="chain" id="PRO_0000104599" description="Large ribosomal subunit protein uL30">
    <location>
        <begin position="1"/>
        <end position="65"/>
    </location>
</feature>
<reference key="1">
    <citation type="journal article" date="1998" name="Nature">
        <title>Deciphering the biology of Mycobacterium tuberculosis from the complete genome sequence.</title>
        <authorList>
            <person name="Cole S.T."/>
            <person name="Brosch R."/>
            <person name="Parkhill J."/>
            <person name="Garnier T."/>
            <person name="Churcher C.M."/>
            <person name="Harris D.E."/>
            <person name="Gordon S.V."/>
            <person name="Eiglmeier K."/>
            <person name="Gas S."/>
            <person name="Barry C.E. III"/>
            <person name="Tekaia F."/>
            <person name="Badcock K."/>
            <person name="Basham D."/>
            <person name="Brown D."/>
            <person name="Chillingworth T."/>
            <person name="Connor R."/>
            <person name="Davies R.M."/>
            <person name="Devlin K."/>
            <person name="Feltwell T."/>
            <person name="Gentles S."/>
            <person name="Hamlin N."/>
            <person name="Holroyd S."/>
            <person name="Hornsby T."/>
            <person name="Jagels K."/>
            <person name="Krogh A."/>
            <person name="McLean J."/>
            <person name="Moule S."/>
            <person name="Murphy L.D."/>
            <person name="Oliver S."/>
            <person name="Osborne J."/>
            <person name="Quail M.A."/>
            <person name="Rajandream M.A."/>
            <person name="Rogers J."/>
            <person name="Rutter S."/>
            <person name="Seeger K."/>
            <person name="Skelton S."/>
            <person name="Squares S."/>
            <person name="Squares R."/>
            <person name="Sulston J.E."/>
            <person name="Taylor K."/>
            <person name="Whitehead S."/>
            <person name="Barrell B.G."/>
        </authorList>
    </citation>
    <scope>NUCLEOTIDE SEQUENCE [LARGE SCALE GENOMIC DNA]</scope>
    <source>
        <strain>ATCC 25618 / H37Rv</strain>
    </source>
</reference>
<reference key="2">
    <citation type="journal article" date="2011" name="Mol. Cell. Proteomics">
        <title>Proteogenomic analysis of Mycobacterium tuberculosis by high resolution mass spectrometry.</title>
        <authorList>
            <person name="Kelkar D.S."/>
            <person name="Kumar D."/>
            <person name="Kumar P."/>
            <person name="Balakrishnan L."/>
            <person name="Muthusamy B."/>
            <person name="Yadav A.K."/>
            <person name="Shrivastava P."/>
            <person name="Marimuthu A."/>
            <person name="Anand S."/>
            <person name="Sundaram H."/>
            <person name="Kingsbury R."/>
            <person name="Harsha H.C."/>
            <person name="Nair B."/>
            <person name="Prasad T.S."/>
            <person name="Chauhan D.S."/>
            <person name="Katoch K."/>
            <person name="Katoch V.M."/>
            <person name="Kumar P."/>
            <person name="Chaerkady R."/>
            <person name="Ramachandran S."/>
            <person name="Dash D."/>
            <person name="Pandey A."/>
        </authorList>
    </citation>
    <scope>IDENTIFICATION BY MASS SPECTROMETRY [LARGE SCALE ANALYSIS]</scope>
    <source>
        <strain>ATCC 25618 / H37Rv</strain>
    </source>
</reference>
<name>RL30_MYCTU</name>
<sequence length="65" mass="7347">MSQLKITQVRSTIGARWKQRESLRTLGLRRIRHSVIREDNAATRGLIAVVRHLVEVEPAQTGGKT</sequence>
<keyword id="KW-0002">3D-structure</keyword>
<keyword id="KW-1185">Reference proteome</keyword>
<keyword id="KW-0687">Ribonucleoprotein</keyword>
<keyword id="KW-0689">Ribosomal protein</keyword>
<dbReference type="EMBL" id="AL123456">
    <property type="protein sequence ID" value="CCP43466.1"/>
    <property type="molecule type" value="Genomic_DNA"/>
</dbReference>
<dbReference type="PIR" id="E70644">
    <property type="entry name" value="E70644"/>
</dbReference>
<dbReference type="RefSeq" id="NP_215236.1">
    <property type="nucleotide sequence ID" value="NC_000962.3"/>
</dbReference>
<dbReference type="RefSeq" id="WP_003403683.1">
    <property type="nucleotide sequence ID" value="NZ_NVQJ01000007.1"/>
</dbReference>
<dbReference type="PDB" id="5V7Q">
    <property type="method" value="EM"/>
    <property type="resolution" value="3.70 A"/>
    <property type="chains" value="Z=1-65"/>
</dbReference>
<dbReference type="PDB" id="5V93">
    <property type="method" value="EM"/>
    <property type="resolution" value="4.00 A"/>
    <property type="chains" value="Z=1-65"/>
</dbReference>
<dbReference type="PDB" id="7KGB">
    <property type="method" value="EM"/>
    <property type="resolution" value="2.70 A"/>
    <property type="chains" value="Z=1-65"/>
</dbReference>
<dbReference type="PDB" id="7MSC">
    <property type="method" value="EM"/>
    <property type="resolution" value="2.97 A"/>
    <property type="chains" value="Z=1-65"/>
</dbReference>
<dbReference type="PDB" id="7MSH">
    <property type="method" value="EM"/>
    <property type="resolution" value="3.23 A"/>
    <property type="chains" value="Z=1-65"/>
</dbReference>
<dbReference type="PDB" id="7MSM">
    <property type="method" value="EM"/>
    <property type="resolution" value="2.79 A"/>
    <property type="chains" value="Z=1-65"/>
</dbReference>
<dbReference type="PDB" id="7MSZ">
    <property type="method" value="EM"/>
    <property type="resolution" value="3.10 A"/>
    <property type="chains" value="Z=1-65"/>
</dbReference>
<dbReference type="PDB" id="7MT2">
    <property type="method" value="EM"/>
    <property type="resolution" value="2.76 A"/>
    <property type="chains" value="Z=1-65"/>
</dbReference>
<dbReference type="PDB" id="7MT3">
    <property type="method" value="EM"/>
    <property type="resolution" value="2.80 A"/>
    <property type="chains" value="Z=1-65"/>
</dbReference>
<dbReference type="PDB" id="7MT7">
    <property type="method" value="EM"/>
    <property type="resolution" value="2.71 A"/>
    <property type="chains" value="Z=1-65"/>
</dbReference>
<dbReference type="PDB" id="7SFR">
    <property type="method" value="EM"/>
    <property type="resolution" value="2.60 A"/>
    <property type="chains" value="Z=1-65"/>
</dbReference>
<dbReference type="PDBsum" id="5V7Q"/>
<dbReference type="PDBsum" id="5V93"/>
<dbReference type="PDBsum" id="7KGB"/>
<dbReference type="PDBsum" id="7MSC"/>
<dbReference type="PDBsum" id="7MSH"/>
<dbReference type="PDBsum" id="7MSM"/>
<dbReference type="PDBsum" id="7MSZ"/>
<dbReference type="PDBsum" id="7MT2"/>
<dbReference type="PDBsum" id="7MT3"/>
<dbReference type="PDBsum" id="7MT7"/>
<dbReference type="PDBsum" id="7SFR"/>
<dbReference type="EMDB" id="EMD-22865"/>
<dbReference type="EMDB" id="EMD-23961"/>
<dbReference type="EMDB" id="EMD-23962"/>
<dbReference type="EMDB" id="EMD-23969"/>
<dbReference type="EMDB" id="EMD-23972"/>
<dbReference type="EMDB" id="EMD-23974"/>
<dbReference type="EMDB" id="EMD-23975"/>
<dbReference type="EMDB" id="EMD-23976"/>
<dbReference type="EMDB" id="EMD-8645"/>
<dbReference type="SMR" id="P9WHA3"/>
<dbReference type="FunCoup" id="P9WHA3">
    <property type="interactions" value="89"/>
</dbReference>
<dbReference type="STRING" id="83332.Rv0722"/>
<dbReference type="PaxDb" id="83332-Rv0722"/>
<dbReference type="DNASU" id="888505"/>
<dbReference type="GeneID" id="45424687"/>
<dbReference type="GeneID" id="888505"/>
<dbReference type="KEGG" id="mtu:Rv0722"/>
<dbReference type="KEGG" id="mtv:RVBD_0722"/>
<dbReference type="TubercuList" id="Rv0722"/>
<dbReference type="eggNOG" id="COG1841">
    <property type="taxonomic scope" value="Bacteria"/>
</dbReference>
<dbReference type="InParanoid" id="P9WHA3"/>
<dbReference type="OrthoDB" id="9812790at2"/>
<dbReference type="PhylomeDB" id="P9WHA3"/>
<dbReference type="PRO" id="PR:P9WHA3"/>
<dbReference type="Proteomes" id="UP000001584">
    <property type="component" value="Chromosome"/>
</dbReference>
<dbReference type="GO" id="GO:0022625">
    <property type="term" value="C:cytosolic large ribosomal subunit"/>
    <property type="evidence" value="ECO:0000318"/>
    <property type="project" value="GO_Central"/>
</dbReference>
<dbReference type="GO" id="GO:0003735">
    <property type="term" value="F:structural constituent of ribosome"/>
    <property type="evidence" value="ECO:0007669"/>
    <property type="project" value="InterPro"/>
</dbReference>
<dbReference type="GO" id="GO:0006412">
    <property type="term" value="P:translation"/>
    <property type="evidence" value="ECO:0007669"/>
    <property type="project" value="UniProtKB-UniRule"/>
</dbReference>
<dbReference type="CDD" id="cd01658">
    <property type="entry name" value="Ribosomal_L30"/>
    <property type="match status" value="1"/>
</dbReference>
<dbReference type="FunFam" id="3.30.1390.20:FF:000001">
    <property type="entry name" value="50S ribosomal protein L30"/>
    <property type="match status" value="1"/>
</dbReference>
<dbReference type="Gene3D" id="3.30.1390.20">
    <property type="entry name" value="Ribosomal protein L30, ferredoxin-like fold domain"/>
    <property type="match status" value="1"/>
</dbReference>
<dbReference type="HAMAP" id="MF_01371_B">
    <property type="entry name" value="Ribosomal_uL30_B"/>
    <property type="match status" value="1"/>
</dbReference>
<dbReference type="InterPro" id="IPR036919">
    <property type="entry name" value="Ribo_uL30_ferredoxin-like_sf"/>
</dbReference>
<dbReference type="InterPro" id="IPR005996">
    <property type="entry name" value="Ribosomal_uL30_bac-type"/>
</dbReference>
<dbReference type="InterPro" id="IPR018038">
    <property type="entry name" value="Ribosomal_uL30_CS"/>
</dbReference>
<dbReference type="InterPro" id="IPR016082">
    <property type="entry name" value="Ribosomal_uL30_ferredoxin-like"/>
</dbReference>
<dbReference type="NCBIfam" id="TIGR01308">
    <property type="entry name" value="rpmD_bact"/>
    <property type="match status" value="1"/>
</dbReference>
<dbReference type="PANTHER" id="PTHR15892:SF2">
    <property type="entry name" value="LARGE RIBOSOMAL SUBUNIT PROTEIN UL30M"/>
    <property type="match status" value="1"/>
</dbReference>
<dbReference type="PANTHER" id="PTHR15892">
    <property type="entry name" value="MITOCHONDRIAL RIBOSOMAL PROTEIN L30"/>
    <property type="match status" value="1"/>
</dbReference>
<dbReference type="Pfam" id="PF00327">
    <property type="entry name" value="Ribosomal_L30"/>
    <property type="match status" value="1"/>
</dbReference>
<dbReference type="PIRSF" id="PIRSF002211">
    <property type="entry name" value="Ribosomal_L30_bac-type"/>
    <property type="match status" value="1"/>
</dbReference>
<dbReference type="SUPFAM" id="SSF55129">
    <property type="entry name" value="Ribosomal protein L30p/L7e"/>
    <property type="match status" value="1"/>
</dbReference>
<dbReference type="PROSITE" id="PS00634">
    <property type="entry name" value="RIBOSOMAL_L30"/>
    <property type="match status" value="1"/>
</dbReference>
<proteinExistence type="evidence at protein level"/>
<gene>
    <name evidence="1" type="primary">rpmD</name>
    <name type="ordered locus">Rv0722</name>
    <name type="ORF">MTCY210.41</name>
</gene>
<protein>
    <recommendedName>
        <fullName evidence="1">Large ribosomal subunit protein uL30</fullName>
    </recommendedName>
    <alternativeName>
        <fullName evidence="2">50S ribosomal protein L30</fullName>
    </alternativeName>
</protein>
<organism>
    <name type="scientific">Mycobacterium tuberculosis (strain ATCC 25618 / H37Rv)</name>
    <dbReference type="NCBI Taxonomy" id="83332"/>
    <lineage>
        <taxon>Bacteria</taxon>
        <taxon>Bacillati</taxon>
        <taxon>Actinomycetota</taxon>
        <taxon>Actinomycetes</taxon>
        <taxon>Mycobacteriales</taxon>
        <taxon>Mycobacteriaceae</taxon>
        <taxon>Mycobacterium</taxon>
        <taxon>Mycobacterium tuberculosis complex</taxon>
    </lineage>
</organism>
<accession>P9WHA3</accession>
<accession>L0T4N7</accession>
<accession>P66181</accession>
<accession>P95070</accession>